<accession>P05442</accession>
<keyword id="KW-0066">ATP synthesis</keyword>
<keyword id="KW-0997">Cell inner membrane</keyword>
<keyword id="KW-1003">Cell membrane</keyword>
<keyword id="KW-0139">CF(1)</keyword>
<keyword id="KW-0375">Hydrogen ion transport</keyword>
<keyword id="KW-0406">Ion transport</keyword>
<keyword id="KW-0472">Membrane</keyword>
<keyword id="KW-0813">Transport</keyword>
<evidence type="ECO:0000250" key="1"/>
<evidence type="ECO:0000305" key="2"/>
<feature type="chain" id="PRO_0000188191" description="ATP synthase epsilon chain">
    <location>
        <begin position="1"/>
        <end position="134"/>
    </location>
</feature>
<organism>
    <name type="scientific">Rhodospirillum rubrum</name>
    <dbReference type="NCBI Taxonomy" id="1085"/>
    <lineage>
        <taxon>Bacteria</taxon>
        <taxon>Pseudomonadati</taxon>
        <taxon>Pseudomonadota</taxon>
        <taxon>Alphaproteobacteria</taxon>
        <taxon>Rhodospirillales</taxon>
        <taxon>Rhodospirillaceae</taxon>
        <taxon>Rhodospirillum</taxon>
    </lineage>
</organism>
<gene>
    <name type="primary">atpC</name>
</gene>
<proteinExistence type="inferred from homology"/>
<comment type="function">
    <text evidence="1">Produces ATP from ADP in the presence of a proton gradient across the membrane.</text>
</comment>
<comment type="subunit">
    <text>F-type ATPases have 2 components, CF(1) - the catalytic core - and CF(0) - the membrane proton channel. CF(1) has five subunits: alpha(3), beta(3), gamma(1), delta(1), epsilon(1). CF(0) has three main subunits: a, b and c.</text>
</comment>
<comment type="subcellular location">
    <subcellularLocation>
        <location evidence="1">Cell inner membrane</location>
        <topology evidence="1">Peripheral membrane protein</topology>
    </subcellularLocation>
</comment>
<comment type="similarity">
    <text evidence="2">Belongs to the ATPase epsilon chain family.</text>
</comment>
<sequence>MAETTEFELVSPERLLFSEPVEMVVVPGTDGDFGAMPRHAPLLSTVRPGVISTYNGGKVQRRIFVAGGFAEVTEDRCTVLADEAFDLASLSEEAVRARLQAADDRLKEATSEAEKAEAAQAKAIAEALLAARKG</sequence>
<reference key="1">
    <citation type="journal article" date="1985" name="Biochem. J.">
        <title>Nucleotide sequence of the Rhodospirillum rubrum atp operon.</title>
        <authorList>
            <person name="Falk G."/>
            <person name="Hampe A."/>
            <person name="Walker J.E."/>
        </authorList>
    </citation>
    <scope>NUCLEOTIDE SEQUENCE [GENOMIC DNA]</scope>
</reference>
<dbReference type="EMBL" id="X02499">
    <property type="protein sequence ID" value="CAB97256.1"/>
    <property type="molecule type" value="Genomic_DNA"/>
</dbReference>
<dbReference type="PIR" id="S08584">
    <property type="entry name" value="PWQFE"/>
</dbReference>
<dbReference type="RefSeq" id="WP_011388982.1">
    <property type="nucleotide sequence ID" value="NZ_DAMDTZ010000168.1"/>
</dbReference>
<dbReference type="SMR" id="P05442"/>
<dbReference type="OMA" id="HQTLYSE"/>
<dbReference type="GO" id="GO:0005886">
    <property type="term" value="C:plasma membrane"/>
    <property type="evidence" value="ECO:0007669"/>
    <property type="project" value="UniProtKB-SubCell"/>
</dbReference>
<dbReference type="GO" id="GO:0045259">
    <property type="term" value="C:proton-transporting ATP synthase complex"/>
    <property type="evidence" value="ECO:0007669"/>
    <property type="project" value="UniProtKB-KW"/>
</dbReference>
<dbReference type="GO" id="GO:0005524">
    <property type="term" value="F:ATP binding"/>
    <property type="evidence" value="ECO:0007669"/>
    <property type="project" value="UniProtKB-UniRule"/>
</dbReference>
<dbReference type="GO" id="GO:0046933">
    <property type="term" value="F:proton-transporting ATP synthase activity, rotational mechanism"/>
    <property type="evidence" value="ECO:0007669"/>
    <property type="project" value="UniProtKB-UniRule"/>
</dbReference>
<dbReference type="CDD" id="cd12152">
    <property type="entry name" value="F1-ATPase_delta"/>
    <property type="match status" value="1"/>
</dbReference>
<dbReference type="Gene3D" id="2.60.15.10">
    <property type="entry name" value="F0F1 ATP synthase delta/epsilon subunit, N-terminal"/>
    <property type="match status" value="1"/>
</dbReference>
<dbReference type="HAMAP" id="MF_00530">
    <property type="entry name" value="ATP_synth_epsil_bac"/>
    <property type="match status" value="1"/>
</dbReference>
<dbReference type="InterPro" id="IPR001469">
    <property type="entry name" value="ATP_synth_F1_dsu/esu"/>
</dbReference>
<dbReference type="InterPro" id="IPR020546">
    <property type="entry name" value="ATP_synth_F1_dsu/esu_N"/>
</dbReference>
<dbReference type="InterPro" id="IPR036771">
    <property type="entry name" value="ATPsynth_dsu/esu_N"/>
</dbReference>
<dbReference type="NCBIfam" id="TIGR01216">
    <property type="entry name" value="ATP_synt_epsi"/>
    <property type="match status" value="1"/>
</dbReference>
<dbReference type="NCBIfam" id="NF001851">
    <property type="entry name" value="PRK00571.2-4"/>
    <property type="match status" value="1"/>
</dbReference>
<dbReference type="PANTHER" id="PTHR13822">
    <property type="entry name" value="ATP SYNTHASE DELTA/EPSILON CHAIN"/>
    <property type="match status" value="1"/>
</dbReference>
<dbReference type="PANTHER" id="PTHR13822:SF10">
    <property type="entry name" value="ATP SYNTHASE EPSILON CHAIN, CHLOROPLASTIC"/>
    <property type="match status" value="1"/>
</dbReference>
<dbReference type="Pfam" id="PF02823">
    <property type="entry name" value="ATP-synt_DE_N"/>
    <property type="match status" value="1"/>
</dbReference>
<dbReference type="SUPFAM" id="SSF51344">
    <property type="entry name" value="Epsilon subunit of F1F0-ATP synthase N-terminal domain"/>
    <property type="match status" value="1"/>
</dbReference>
<name>ATPE_RHORU</name>
<protein>
    <recommendedName>
        <fullName>ATP synthase epsilon chain</fullName>
    </recommendedName>
    <alternativeName>
        <fullName>ATP synthase F1 sector epsilon subunit</fullName>
    </alternativeName>
    <alternativeName>
        <fullName>F-ATPase epsilon subunit</fullName>
    </alternativeName>
</protein>